<keyword id="KW-1003">Cell membrane</keyword>
<keyword id="KW-1015">Disulfide bond</keyword>
<keyword id="KW-0297">G-protein coupled receptor</keyword>
<keyword id="KW-0325">Glycoprotein</keyword>
<keyword id="KW-0472">Membrane</keyword>
<keyword id="KW-0675">Receptor</keyword>
<keyword id="KW-1185">Reference proteome</keyword>
<keyword id="KW-0807">Transducer</keyword>
<keyword id="KW-0812">Transmembrane</keyword>
<keyword id="KW-1133">Transmembrane helix</keyword>
<proteinExistence type="evidence at transcript level"/>
<accession>Q8BGE9</accession>
<evidence type="ECO:0000250" key="1"/>
<evidence type="ECO:0000255" key="2"/>
<evidence type="ECO:0000255" key="3">
    <source>
        <dbReference type="PROSITE-ProRule" id="PRU00521"/>
    </source>
</evidence>
<name>RL3R1_MOUSE</name>
<protein>
    <recommendedName>
        <fullName>Relaxin-3 receptor 1</fullName>
        <shortName>RLN3 receptor 1</shortName>
    </recommendedName>
    <alternativeName>
        <fullName>G protein-coupled receptor SALPR homolog</fullName>
    </alternativeName>
    <alternativeName>
        <fullName>Relaxin family peptide receptor 3</fullName>
    </alternativeName>
</protein>
<dbReference type="EMBL" id="AK043414">
    <property type="protein sequence ID" value="BAC31542.1"/>
    <property type="molecule type" value="mRNA"/>
</dbReference>
<dbReference type="EMBL" id="AK046367">
    <property type="protein sequence ID" value="BAC32691.1"/>
    <property type="molecule type" value="mRNA"/>
</dbReference>
<dbReference type="EMBL" id="AK084001">
    <property type="protein sequence ID" value="BAC39091.1"/>
    <property type="molecule type" value="mRNA"/>
</dbReference>
<dbReference type="EMBL" id="BC053073">
    <property type="protein sequence ID" value="AAH53073.1"/>
    <property type="molecule type" value="mRNA"/>
</dbReference>
<dbReference type="CCDS" id="CCDS27383.1"/>
<dbReference type="RefSeq" id="NP_848832.1">
    <property type="nucleotide sequence ID" value="NM_178717.3"/>
</dbReference>
<dbReference type="SMR" id="Q8BGE9"/>
<dbReference type="FunCoup" id="Q8BGE9">
    <property type="interactions" value="1156"/>
</dbReference>
<dbReference type="STRING" id="10090.ENSMUSP00000062741"/>
<dbReference type="GlyCosmos" id="Q8BGE9">
    <property type="glycosylation" value="2 sites, No reported glycans"/>
</dbReference>
<dbReference type="GlyGen" id="Q8BGE9">
    <property type="glycosylation" value="3 sites"/>
</dbReference>
<dbReference type="iPTMnet" id="Q8BGE9"/>
<dbReference type="PhosphoSitePlus" id="Q8BGE9"/>
<dbReference type="PaxDb" id="10090-ENSMUSP00000062741"/>
<dbReference type="DNASU" id="239336"/>
<dbReference type="Ensembl" id="ENSMUST00000058007.7">
    <property type="protein sequence ID" value="ENSMUSP00000062741.6"/>
    <property type="gene ID" value="ENSMUSG00000060735.5"/>
</dbReference>
<dbReference type="GeneID" id="239336"/>
<dbReference type="KEGG" id="mmu:239336"/>
<dbReference type="UCSC" id="uc007vgy.1">
    <property type="organism name" value="mouse"/>
</dbReference>
<dbReference type="AGR" id="MGI:2441827"/>
<dbReference type="CTD" id="51289"/>
<dbReference type="MGI" id="MGI:2441827">
    <property type="gene designation" value="Rxfp3"/>
</dbReference>
<dbReference type="VEuPathDB" id="HostDB:ENSMUSG00000060735"/>
<dbReference type="eggNOG" id="KOG3656">
    <property type="taxonomic scope" value="Eukaryota"/>
</dbReference>
<dbReference type="GeneTree" id="ENSGT01130000278308"/>
<dbReference type="HOGENOM" id="CLU_009579_8_1_1"/>
<dbReference type="InParanoid" id="Q8BGE9"/>
<dbReference type="OMA" id="CVLIWAS"/>
<dbReference type="OrthoDB" id="9936726at2759"/>
<dbReference type="PhylomeDB" id="Q8BGE9"/>
<dbReference type="TreeFam" id="TF330024"/>
<dbReference type="Reactome" id="R-MMU-418594">
    <property type="pathway name" value="G alpha (i) signalling events"/>
</dbReference>
<dbReference type="Reactome" id="R-MMU-444821">
    <property type="pathway name" value="Relaxin receptors"/>
</dbReference>
<dbReference type="BioGRID-ORCS" id="239336">
    <property type="hits" value="2 hits in 76 CRISPR screens"/>
</dbReference>
<dbReference type="ChiTaRS" id="Rxfp3">
    <property type="organism name" value="mouse"/>
</dbReference>
<dbReference type="PRO" id="PR:Q8BGE9"/>
<dbReference type="Proteomes" id="UP000000589">
    <property type="component" value="Chromosome 15"/>
</dbReference>
<dbReference type="RNAct" id="Q8BGE9">
    <property type="molecule type" value="protein"/>
</dbReference>
<dbReference type="Bgee" id="ENSMUSG00000060735">
    <property type="expression patterns" value="Expressed in humerus cartilage element and 20 other cell types or tissues"/>
</dbReference>
<dbReference type="ExpressionAtlas" id="Q8BGE9">
    <property type="expression patterns" value="baseline and differential"/>
</dbReference>
<dbReference type="GO" id="GO:0016020">
    <property type="term" value="C:membrane"/>
    <property type="evidence" value="ECO:0000305"/>
    <property type="project" value="MGI"/>
</dbReference>
<dbReference type="GO" id="GO:0005886">
    <property type="term" value="C:plasma membrane"/>
    <property type="evidence" value="ECO:0007669"/>
    <property type="project" value="UniProtKB-SubCell"/>
</dbReference>
<dbReference type="GO" id="GO:0008528">
    <property type="term" value="F:G protein-coupled peptide receptor activity"/>
    <property type="evidence" value="ECO:0000314"/>
    <property type="project" value="MGI"/>
</dbReference>
<dbReference type="GO" id="GO:0007200">
    <property type="term" value="P:phospholipase C-activating G protein-coupled receptor signaling pathway"/>
    <property type="evidence" value="ECO:0000314"/>
    <property type="project" value="MGI"/>
</dbReference>
<dbReference type="FunFam" id="1.20.1070.10:FF:000216">
    <property type="entry name" value="Relaxin family peptide receptor 3"/>
    <property type="match status" value="1"/>
</dbReference>
<dbReference type="Gene3D" id="1.20.1070.10">
    <property type="entry name" value="Rhodopsin 7-helix transmembrane proteins"/>
    <property type="match status" value="1"/>
</dbReference>
<dbReference type="InterPro" id="IPR050119">
    <property type="entry name" value="CCR1-9-like"/>
</dbReference>
<dbReference type="InterPro" id="IPR000276">
    <property type="entry name" value="GPCR_Rhodpsn"/>
</dbReference>
<dbReference type="InterPro" id="IPR017452">
    <property type="entry name" value="GPCR_Rhodpsn_7TM"/>
</dbReference>
<dbReference type="PANTHER" id="PTHR10489">
    <property type="entry name" value="CELL ADHESION MOLECULE"/>
    <property type="match status" value="1"/>
</dbReference>
<dbReference type="PANTHER" id="PTHR10489:SF951">
    <property type="entry name" value="RELAXIN FAMILY PEPTIDE_INSL5 RECEPTOR 4"/>
    <property type="match status" value="1"/>
</dbReference>
<dbReference type="Pfam" id="PF00001">
    <property type="entry name" value="7tm_1"/>
    <property type="match status" value="1"/>
</dbReference>
<dbReference type="PRINTS" id="PR00526">
    <property type="entry name" value="FMETLEUPHER"/>
</dbReference>
<dbReference type="PRINTS" id="PR00237">
    <property type="entry name" value="GPCRRHODOPSN"/>
</dbReference>
<dbReference type="SUPFAM" id="SSF81321">
    <property type="entry name" value="Family A G protein-coupled receptor-like"/>
    <property type="match status" value="1"/>
</dbReference>
<dbReference type="PROSITE" id="PS50262">
    <property type="entry name" value="G_PROTEIN_RECEP_F1_2"/>
    <property type="match status" value="1"/>
</dbReference>
<organism>
    <name type="scientific">Mus musculus</name>
    <name type="common">Mouse</name>
    <dbReference type="NCBI Taxonomy" id="10090"/>
    <lineage>
        <taxon>Eukaryota</taxon>
        <taxon>Metazoa</taxon>
        <taxon>Chordata</taxon>
        <taxon>Craniata</taxon>
        <taxon>Vertebrata</taxon>
        <taxon>Euteleostomi</taxon>
        <taxon>Mammalia</taxon>
        <taxon>Eutheria</taxon>
        <taxon>Euarchontoglires</taxon>
        <taxon>Glires</taxon>
        <taxon>Rodentia</taxon>
        <taxon>Myomorpha</taxon>
        <taxon>Muroidea</taxon>
        <taxon>Muridae</taxon>
        <taxon>Murinae</taxon>
        <taxon>Mus</taxon>
        <taxon>Mus</taxon>
    </lineage>
</organism>
<reference key="1">
    <citation type="journal article" date="2005" name="Science">
        <title>The transcriptional landscape of the mammalian genome.</title>
        <authorList>
            <person name="Carninci P."/>
            <person name="Kasukawa T."/>
            <person name="Katayama S."/>
            <person name="Gough J."/>
            <person name="Frith M.C."/>
            <person name="Maeda N."/>
            <person name="Oyama R."/>
            <person name="Ravasi T."/>
            <person name="Lenhard B."/>
            <person name="Wells C."/>
            <person name="Kodzius R."/>
            <person name="Shimokawa K."/>
            <person name="Bajic V.B."/>
            <person name="Brenner S.E."/>
            <person name="Batalov S."/>
            <person name="Forrest A.R."/>
            <person name="Zavolan M."/>
            <person name="Davis M.J."/>
            <person name="Wilming L.G."/>
            <person name="Aidinis V."/>
            <person name="Allen J.E."/>
            <person name="Ambesi-Impiombato A."/>
            <person name="Apweiler R."/>
            <person name="Aturaliya R.N."/>
            <person name="Bailey T.L."/>
            <person name="Bansal M."/>
            <person name="Baxter L."/>
            <person name="Beisel K.W."/>
            <person name="Bersano T."/>
            <person name="Bono H."/>
            <person name="Chalk A.M."/>
            <person name="Chiu K.P."/>
            <person name="Choudhary V."/>
            <person name="Christoffels A."/>
            <person name="Clutterbuck D.R."/>
            <person name="Crowe M.L."/>
            <person name="Dalla E."/>
            <person name="Dalrymple B.P."/>
            <person name="de Bono B."/>
            <person name="Della Gatta G."/>
            <person name="di Bernardo D."/>
            <person name="Down T."/>
            <person name="Engstrom P."/>
            <person name="Fagiolini M."/>
            <person name="Faulkner G."/>
            <person name="Fletcher C.F."/>
            <person name="Fukushima T."/>
            <person name="Furuno M."/>
            <person name="Futaki S."/>
            <person name="Gariboldi M."/>
            <person name="Georgii-Hemming P."/>
            <person name="Gingeras T.R."/>
            <person name="Gojobori T."/>
            <person name="Green R.E."/>
            <person name="Gustincich S."/>
            <person name="Harbers M."/>
            <person name="Hayashi Y."/>
            <person name="Hensch T.K."/>
            <person name="Hirokawa N."/>
            <person name="Hill D."/>
            <person name="Huminiecki L."/>
            <person name="Iacono M."/>
            <person name="Ikeo K."/>
            <person name="Iwama A."/>
            <person name="Ishikawa T."/>
            <person name="Jakt M."/>
            <person name="Kanapin A."/>
            <person name="Katoh M."/>
            <person name="Kawasawa Y."/>
            <person name="Kelso J."/>
            <person name="Kitamura H."/>
            <person name="Kitano H."/>
            <person name="Kollias G."/>
            <person name="Krishnan S.P."/>
            <person name="Kruger A."/>
            <person name="Kummerfeld S.K."/>
            <person name="Kurochkin I.V."/>
            <person name="Lareau L.F."/>
            <person name="Lazarevic D."/>
            <person name="Lipovich L."/>
            <person name="Liu J."/>
            <person name="Liuni S."/>
            <person name="McWilliam S."/>
            <person name="Madan Babu M."/>
            <person name="Madera M."/>
            <person name="Marchionni L."/>
            <person name="Matsuda H."/>
            <person name="Matsuzawa S."/>
            <person name="Miki H."/>
            <person name="Mignone F."/>
            <person name="Miyake S."/>
            <person name="Morris K."/>
            <person name="Mottagui-Tabar S."/>
            <person name="Mulder N."/>
            <person name="Nakano N."/>
            <person name="Nakauchi H."/>
            <person name="Ng P."/>
            <person name="Nilsson R."/>
            <person name="Nishiguchi S."/>
            <person name="Nishikawa S."/>
            <person name="Nori F."/>
            <person name="Ohara O."/>
            <person name="Okazaki Y."/>
            <person name="Orlando V."/>
            <person name="Pang K.C."/>
            <person name="Pavan W.J."/>
            <person name="Pavesi G."/>
            <person name="Pesole G."/>
            <person name="Petrovsky N."/>
            <person name="Piazza S."/>
            <person name="Reed J."/>
            <person name="Reid J.F."/>
            <person name="Ring B.Z."/>
            <person name="Ringwald M."/>
            <person name="Rost B."/>
            <person name="Ruan Y."/>
            <person name="Salzberg S.L."/>
            <person name="Sandelin A."/>
            <person name="Schneider C."/>
            <person name="Schoenbach C."/>
            <person name="Sekiguchi K."/>
            <person name="Semple C.A."/>
            <person name="Seno S."/>
            <person name="Sessa L."/>
            <person name="Sheng Y."/>
            <person name="Shibata Y."/>
            <person name="Shimada H."/>
            <person name="Shimada K."/>
            <person name="Silva D."/>
            <person name="Sinclair B."/>
            <person name="Sperling S."/>
            <person name="Stupka E."/>
            <person name="Sugiura K."/>
            <person name="Sultana R."/>
            <person name="Takenaka Y."/>
            <person name="Taki K."/>
            <person name="Tammoja K."/>
            <person name="Tan S.L."/>
            <person name="Tang S."/>
            <person name="Taylor M.S."/>
            <person name="Tegner J."/>
            <person name="Teichmann S.A."/>
            <person name="Ueda H.R."/>
            <person name="van Nimwegen E."/>
            <person name="Verardo R."/>
            <person name="Wei C.L."/>
            <person name="Yagi K."/>
            <person name="Yamanishi H."/>
            <person name="Zabarovsky E."/>
            <person name="Zhu S."/>
            <person name="Zimmer A."/>
            <person name="Hide W."/>
            <person name="Bult C."/>
            <person name="Grimmond S.M."/>
            <person name="Teasdale R.D."/>
            <person name="Liu E.T."/>
            <person name="Brusic V."/>
            <person name="Quackenbush J."/>
            <person name="Wahlestedt C."/>
            <person name="Mattick J.S."/>
            <person name="Hume D.A."/>
            <person name="Kai C."/>
            <person name="Sasaki D."/>
            <person name="Tomaru Y."/>
            <person name="Fukuda S."/>
            <person name="Kanamori-Katayama M."/>
            <person name="Suzuki M."/>
            <person name="Aoki J."/>
            <person name="Arakawa T."/>
            <person name="Iida J."/>
            <person name="Imamura K."/>
            <person name="Itoh M."/>
            <person name="Kato T."/>
            <person name="Kawaji H."/>
            <person name="Kawagashira N."/>
            <person name="Kawashima T."/>
            <person name="Kojima M."/>
            <person name="Kondo S."/>
            <person name="Konno H."/>
            <person name="Nakano K."/>
            <person name="Ninomiya N."/>
            <person name="Nishio T."/>
            <person name="Okada M."/>
            <person name="Plessy C."/>
            <person name="Shibata K."/>
            <person name="Shiraki T."/>
            <person name="Suzuki S."/>
            <person name="Tagami M."/>
            <person name="Waki K."/>
            <person name="Watahiki A."/>
            <person name="Okamura-Oho Y."/>
            <person name="Suzuki H."/>
            <person name="Kawai J."/>
            <person name="Hayashizaki Y."/>
        </authorList>
    </citation>
    <scope>NUCLEOTIDE SEQUENCE [LARGE SCALE MRNA]</scope>
    <source>
        <strain>C57BL/6J</strain>
        <tissue>Brain</tissue>
        <tissue>Cerebellum</tissue>
        <tissue>Spinal ganglion</tissue>
    </source>
</reference>
<reference key="2">
    <citation type="journal article" date="2004" name="Genome Res.">
        <title>The status, quality, and expansion of the NIH full-length cDNA project: the Mammalian Gene Collection (MGC).</title>
        <authorList>
            <consortium name="The MGC Project Team"/>
        </authorList>
    </citation>
    <scope>NUCLEOTIDE SEQUENCE [LARGE SCALE MRNA]</scope>
    <source>
        <strain>C57BL/6J</strain>
        <tissue>Brain</tissue>
    </source>
</reference>
<comment type="function">
    <text evidence="1">Receptor for RNL3/relaxin-3. Binding of the ligand inhibit cAMP accumulation (By similarity).</text>
</comment>
<comment type="subcellular location">
    <subcellularLocation>
        <location>Cell membrane</location>
        <topology>Multi-pass membrane protein</topology>
    </subcellularLocation>
</comment>
<comment type="similarity">
    <text evidence="3">Belongs to the G-protein coupled receptor 1 family.</text>
</comment>
<gene>
    <name type="primary">Rxfp3</name>
    <name type="synonym">Rln3r1</name>
    <name type="synonym">Salpr</name>
</gene>
<sequence length="472" mass="51573">MQVASATPAATVRKAAAGDELSEFFALTPDLLEVANASGNASLQLQDLWWELGLELPDGAAPGHPPGGGGAESTDTEARVRILISAVYWVVCALGLAGNLLVLYLMKSKQGWRKSSINLFVTNLALTDFQFVLTLPFWAVENALDFKWPFGKAMCKIVSMVTSMNMYASVFFLTAMSVARYHSVASALKSHRTRGRGRGDCCGQSLRESCCFSAKVLCGLIWASAALASLPNAIFSTTIRVLGEELCLMHFPDKLLGWDRQFWLGLYHLQKVLLGFLLPLSIISLCYLLLVRFISDRRVVGTTDAVGAAAAPGGGLSTASARRRSKVTKSVTIVVLSFFLCWLPNQALTTWSILIKFNAVPFSQEYFQCQVYAFPVSVCLAHSNSCLNPILYCLVRREFRKALKNLLWRIASPSLTNMRPFTATTKPEPEDHGLQALAPLNAAAEPDLIYYPPGVVVYSGGRYDLLPSSSAY</sequence>
<feature type="chain" id="PRO_0000070105" description="Relaxin-3 receptor 1">
    <location>
        <begin position="1"/>
        <end position="472"/>
    </location>
</feature>
<feature type="topological domain" description="Extracellular" evidence="2">
    <location>
        <begin position="1"/>
        <end position="81"/>
    </location>
</feature>
<feature type="transmembrane region" description="Helical; Name=1" evidence="2">
    <location>
        <begin position="82"/>
        <end position="102"/>
    </location>
</feature>
<feature type="topological domain" description="Cytoplasmic" evidence="2">
    <location>
        <begin position="103"/>
        <end position="119"/>
    </location>
</feature>
<feature type="transmembrane region" description="Helical; Name=2" evidence="2">
    <location>
        <begin position="120"/>
        <end position="140"/>
    </location>
</feature>
<feature type="topological domain" description="Extracellular" evidence="2">
    <location>
        <begin position="141"/>
        <end position="156"/>
    </location>
</feature>
<feature type="transmembrane region" description="Helical; Name=3" evidence="2">
    <location>
        <begin position="157"/>
        <end position="177"/>
    </location>
</feature>
<feature type="topological domain" description="Cytoplasmic" evidence="2">
    <location>
        <begin position="178"/>
        <end position="215"/>
    </location>
</feature>
<feature type="transmembrane region" description="Helical; Name=4" evidence="2">
    <location>
        <begin position="216"/>
        <end position="236"/>
    </location>
</feature>
<feature type="topological domain" description="Extracellular" evidence="2">
    <location>
        <begin position="237"/>
        <end position="270"/>
    </location>
</feature>
<feature type="transmembrane region" description="Helical; Name=5" evidence="2">
    <location>
        <begin position="271"/>
        <end position="291"/>
    </location>
</feature>
<feature type="topological domain" description="Cytoplasmic" evidence="2">
    <location>
        <begin position="292"/>
        <end position="298"/>
    </location>
</feature>
<feature type="transmembrane region" description="Helical; Name=6" evidence="2">
    <location>
        <begin position="299"/>
        <end position="319"/>
    </location>
</feature>
<feature type="topological domain" description="Extracellular" evidence="2">
    <location>
        <begin position="320"/>
        <end position="332"/>
    </location>
</feature>
<feature type="transmembrane region" description="Helical; Name=7" evidence="2">
    <location>
        <begin position="333"/>
        <end position="353"/>
    </location>
</feature>
<feature type="topological domain" description="Cytoplasmic" evidence="2">
    <location>
        <begin position="354"/>
        <end position="472"/>
    </location>
</feature>
<feature type="glycosylation site" description="N-linked (GlcNAc...) asparagine" evidence="2">
    <location>
        <position position="36"/>
    </location>
</feature>
<feature type="glycosylation site" description="N-linked (GlcNAc...) asparagine" evidence="2">
    <location>
        <position position="40"/>
    </location>
</feature>
<feature type="disulfide bond" evidence="3">
    <location>
        <begin position="155"/>
        <end position="247"/>
    </location>
</feature>